<comment type="function">
    <text evidence="1">Plays a central role during spermatogenesis by repressing transposable elements and preventing their mobilization, which is essential for the germline integrity. Acts via the piRNA metabolic process, which mediates the repression of transposable elements during meiosis by forming complexes composed of piRNAs and Piwi proteins and governs the methylation and subsequent repression of transposons. Its association with pi-bodies suggests a participation in the primary piRNAs metabolic process. Required prior to the pachytene stage to facilitate the production of multiple types of piRNAs, including those associated with repeats involved in the regulation of retrotransposons. May act by mediating protein-protein interactions during germ cell maturation (By similarity).</text>
</comment>
<comment type="subunit">
    <text evidence="1">Interacts with DDX4, PIWIL1, RANBP9 and TDRD1.</text>
</comment>
<comment type="subcellular location">
    <subcellularLocation>
        <location evidence="1">Cytoplasm</location>
    </subcellularLocation>
    <text evidence="1">Component of the meiotic nuage, also named P granule, a germ-cell-specific organelle required to repress transposon activity during meiosis. Specifically localizes to pi-bodies, a subset of the nuage which contains primary piRNAs (By similarity).</text>
</comment>
<name>ASZ1_ECHTE</name>
<reference key="1">
    <citation type="submission" date="2006-12" db="EMBL/GenBank/DDBJ databases">
        <title>NISC comparative sequencing initiative.</title>
        <authorList>
            <person name="Antonellis A."/>
            <person name="Ayele K."/>
            <person name="Benjamin B."/>
            <person name="Blakesley R.W."/>
            <person name="Boakye A."/>
            <person name="Bouffard G.G."/>
            <person name="Brinkley C."/>
            <person name="Brooks S."/>
            <person name="Chu G."/>
            <person name="Coleman H."/>
            <person name="Engle J."/>
            <person name="Gestole M."/>
            <person name="Greene A."/>
            <person name="Guan X."/>
            <person name="Gupta J."/>
            <person name="Haghighi P."/>
            <person name="Han J."/>
            <person name="Hansen N."/>
            <person name="Ho S.-L."/>
            <person name="Hu P."/>
            <person name="Hunter G."/>
            <person name="Hurle B."/>
            <person name="Idol J.R."/>
            <person name="Kwong P."/>
            <person name="Laric P."/>
            <person name="Larson S."/>
            <person name="Lee-Lin S.-Q."/>
            <person name="Legaspi R."/>
            <person name="Madden M."/>
            <person name="Maduro Q.L."/>
            <person name="Maduro V.B."/>
            <person name="Margulies E.H."/>
            <person name="Masiello C."/>
            <person name="Maskeri B."/>
            <person name="McDowell J."/>
            <person name="Mojidi H.A."/>
            <person name="Mullikin J.C."/>
            <person name="Oestreicher J.S."/>
            <person name="Park M."/>
            <person name="Portnoy M.E."/>
            <person name="Prasad A."/>
            <person name="Puri O."/>
            <person name="Reddix-Dugue N."/>
            <person name="Schandler K."/>
            <person name="Schueler M.G."/>
            <person name="Sison C."/>
            <person name="Stantripop S."/>
            <person name="Stephen E."/>
            <person name="Taye A."/>
            <person name="Thomas J.W."/>
            <person name="Thomas P.J."/>
            <person name="Tsipouri V."/>
            <person name="Ung L."/>
            <person name="Vogt J.L."/>
            <person name="Wetherby K.D."/>
            <person name="Young A."/>
            <person name="Green E.D."/>
        </authorList>
    </citation>
    <scope>NUCLEOTIDE SEQUENCE [LARGE SCALE GENOMIC DNA]</scope>
</reference>
<gene>
    <name type="primary">ASZ1</name>
    <name type="synonym">GASZ</name>
</gene>
<organism>
    <name type="scientific">Echinops telfairi</name>
    <name type="common">Lesser hedgehog tenrec</name>
    <dbReference type="NCBI Taxonomy" id="9371"/>
    <lineage>
        <taxon>Eukaryota</taxon>
        <taxon>Metazoa</taxon>
        <taxon>Chordata</taxon>
        <taxon>Craniata</taxon>
        <taxon>Vertebrata</taxon>
        <taxon>Euteleostomi</taxon>
        <taxon>Mammalia</taxon>
        <taxon>Eutheria</taxon>
        <taxon>Afrotheria</taxon>
        <taxon>Tenrecidae</taxon>
        <taxon>Tenrecinae</taxon>
        <taxon>Echinops</taxon>
    </lineage>
</organism>
<dbReference type="EMBL" id="DP000274">
    <property type="protein sequence ID" value="ABL76170.1"/>
    <property type="molecule type" value="Genomic_DNA"/>
</dbReference>
<dbReference type="RefSeq" id="XP_004707910.1">
    <property type="nucleotide sequence ID" value="XM_004707853.1"/>
</dbReference>
<dbReference type="RefSeq" id="XP_030741067.2">
    <property type="nucleotide sequence ID" value="XM_030885207.2"/>
</dbReference>
<dbReference type="SMR" id="A1X154"/>
<dbReference type="GeneID" id="101656803"/>
<dbReference type="OrthoDB" id="439236at2759"/>
<dbReference type="Proteomes" id="UP000694863">
    <property type="component" value="Unplaced"/>
</dbReference>
<dbReference type="GO" id="GO:0071546">
    <property type="term" value="C:pi-body"/>
    <property type="evidence" value="ECO:0000250"/>
    <property type="project" value="UniProtKB"/>
</dbReference>
<dbReference type="GO" id="GO:0030154">
    <property type="term" value="P:cell differentiation"/>
    <property type="evidence" value="ECO:0007669"/>
    <property type="project" value="UniProtKB-KW"/>
</dbReference>
<dbReference type="GO" id="GO:0007140">
    <property type="term" value="P:male meiotic nuclear division"/>
    <property type="evidence" value="ECO:0000250"/>
    <property type="project" value="UniProtKB"/>
</dbReference>
<dbReference type="GO" id="GO:0031047">
    <property type="term" value="P:regulatory ncRNA-mediated gene silencing"/>
    <property type="evidence" value="ECO:0007669"/>
    <property type="project" value="UniProtKB-KW"/>
</dbReference>
<dbReference type="GO" id="GO:0007283">
    <property type="term" value="P:spermatogenesis"/>
    <property type="evidence" value="ECO:0000250"/>
    <property type="project" value="UniProtKB"/>
</dbReference>
<dbReference type="GO" id="GO:0010526">
    <property type="term" value="P:transposable element silencing"/>
    <property type="evidence" value="ECO:0000250"/>
    <property type="project" value="UniProtKB"/>
</dbReference>
<dbReference type="CDD" id="cd09521">
    <property type="entry name" value="SAM_ASZ1"/>
    <property type="match status" value="1"/>
</dbReference>
<dbReference type="FunFam" id="1.25.40.20:FF:000192">
    <property type="entry name" value="Ankyrin repeat, SAM and basic leucine zipper domain-containing 1"/>
    <property type="match status" value="1"/>
</dbReference>
<dbReference type="FunFam" id="1.10.150.50:FF:000060">
    <property type="entry name" value="Ankyrin repeat, SAM and basic leucine zipper domain-containing protein 1"/>
    <property type="match status" value="1"/>
</dbReference>
<dbReference type="Gene3D" id="1.25.40.20">
    <property type="entry name" value="Ankyrin repeat-containing domain"/>
    <property type="match status" value="2"/>
</dbReference>
<dbReference type="Gene3D" id="1.10.150.50">
    <property type="entry name" value="Transcription Factor, Ets-1"/>
    <property type="match status" value="1"/>
</dbReference>
<dbReference type="InterPro" id="IPR002110">
    <property type="entry name" value="Ankyrin_rpt"/>
</dbReference>
<dbReference type="InterPro" id="IPR036770">
    <property type="entry name" value="Ankyrin_rpt-contain_sf"/>
</dbReference>
<dbReference type="InterPro" id="IPR042650">
    <property type="entry name" value="Asz1_SAM"/>
</dbReference>
<dbReference type="InterPro" id="IPR001660">
    <property type="entry name" value="SAM"/>
</dbReference>
<dbReference type="InterPro" id="IPR013761">
    <property type="entry name" value="SAM/pointed_sf"/>
</dbReference>
<dbReference type="PANTHER" id="PTHR24157">
    <property type="entry name" value="ANKYRIN REPEAT, SAM AND BASIC LEUCINE ZIPPER DOMAIN-CONTAINING PROTEIN 1"/>
    <property type="match status" value="1"/>
</dbReference>
<dbReference type="PANTHER" id="PTHR24157:SF3">
    <property type="entry name" value="ANKYRIN REPEAT, SAM AND BASIC LEUCINE ZIPPER DOMAIN-CONTAINING PROTEIN 1"/>
    <property type="match status" value="1"/>
</dbReference>
<dbReference type="Pfam" id="PF12796">
    <property type="entry name" value="Ank_2"/>
    <property type="match status" value="1"/>
</dbReference>
<dbReference type="Pfam" id="PF13637">
    <property type="entry name" value="Ank_4"/>
    <property type="match status" value="1"/>
</dbReference>
<dbReference type="Pfam" id="PF07647">
    <property type="entry name" value="SAM_2"/>
    <property type="match status" value="1"/>
</dbReference>
<dbReference type="PRINTS" id="PR01415">
    <property type="entry name" value="ANKYRIN"/>
</dbReference>
<dbReference type="SMART" id="SM00248">
    <property type="entry name" value="ANK"/>
    <property type="match status" value="5"/>
</dbReference>
<dbReference type="SUPFAM" id="SSF48403">
    <property type="entry name" value="Ankyrin repeat"/>
    <property type="match status" value="1"/>
</dbReference>
<dbReference type="SUPFAM" id="SSF140860">
    <property type="entry name" value="Pseudo ankyrin repeat-like"/>
    <property type="match status" value="1"/>
</dbReference>
<dbReference type="SUPFAM" id="SSF47769">
    <property type="entry name" value="SAM/Pointed domain"/>
    <property type="match status" value="1"/>
</dbReference>
<dbReference type="PROSITE" id="PS50297">
    <property type="entry name" value="ANK_REP_REGION"/>
    <property type="match status" value="1"/>
</dbReference>
<dbReference type="PROSITE" id="PS50088">
    <property type="entry name" value="ANK_REPEAT"/>
    <property type="match status" value="3"/>
</dbReference>
<keyword id="KW-0040">ANK repeat</keyword>
<keyword id="KW-0963">Cytoplasm</keyword>
<keyword id="KW-0217">Developmental protein</keyword>
<keyword id="KW-0221">Differentiation</keyword>
<keyword id="KW-0469">Meiosis</keyword>
<keyword id="KW-0597">Phosphoprotein</keyword>
<keyword id="KW-0677">Repeat</keyword>
<keyword id="KW-0943">RNA-mediated gene silencing</keyword>
<keyword id="KW-0744">Spermatogenesis</keyword>
<proteinExistence type="inferred from homology"/>
<protein>
    <recommendedName>
        <fullName>Ankyrin repeat, SAM and basic leucine zipper domain-containing protein 1</fullName>
    </recommendedName>
    <alternativeName>
        <fullName>Germ cell-specific ankyrin, SAM and basic leucine zipper domain-containing protein</fullName>
    </alternativeName>
</protein>
<sequence>MAASSLWGPAVAGGGESSESEDDGWEIGYLDRAPQKFTAPLPAEEKNEMFKKALTTGDTSLVEELLNAGISVDSSFRYGWTPLMFAASIANVNLVRVLLNRGANASFEKDKQTVLMTACSARGSQEQIIKCVELLLSRNADPNVACRRQMTPIMYAARGGHPQVVALLVAHGAEVNAQDENGYTALTWAAYQGHKNVILKLLELGANKMLQTKDGKTPSEIANRNKHPEIFSLLSLTLNPLEGKIQQLTKEETICKMLATDCDKEKDNLFSSYTAFGELDLFLHGLGLEHMTDLLKERDISLRHLMTMKKDEFLKNGITNKDQQKILSALKELMVEEIKFGELPEVAKLEISGDEFLNFLLKLNKQCGHLITAVQNIITELPVNSHKIVLEWASPRNFTSVCEELVTNVEGLSEEVCRLKDLIQKLQNERESDPTHIPLVEEVSPWKSRLLKRTAVTVCGFGILLGICKLMFQRKLL</sequence>
<evidence type="ECO:0000250" key="1"/>
<evidence type="ECO:0000250" key="2">
    <source>
        <dbReference type="UniProtKB" id="Q8VD46"/>
    </source>
</evidence>
<evidence type="ECO:0000256" key="3">
    <source>
        <dbReference type="SAM" id="MobiDB-lite"/>
    </source>
</evidence>
<feature type="chain" id="PRO_0000279858" description="Ankyrin repeat, SAM and basic leucine zipper domain-containing protein 1">
    <location>
        <begin position="1"/>
        <end position="477"/>
    </location>
</feature>
<feature type="repeat" description="ANK 1">
    <location>
        <begin position="45"/>
        <end position="74"/>
    </location>
</feature>
<feature type="repeat" description="ANK 2">
    <location>
        <begin position="78"/>
        <end position="107"/>
    </location>
</feature>
<feature type="repeat" description="ANK 3">
    <location>
        <begin position="110"/>
        <end position="144"/>
    </location>
</feature>
<feature type="repeat" description="ANK 4">
    <location>
        <begin position="148"/>
        <end position="177"/>
    </location>
</feature>
<feature type="repeat" description="ANK 5">
    <location>
        <begin position="181"/>
        <end position="210"/>
    </location>
</feature>
<feature type="repeat" description="ANK 6">
    <location>
        <begin position="214"/>
        <end position="243"/>
    </location>
</feature>
<feature type="domain" description="SAM">
    <location>
        <begin position="272"/>
        <end position="334"/>
    </location>
</feature>
<feature type="region of interest" description="Disordered" evidence="3">
    <location>
        <begin position="1"/>
        <end position="24"/>
    </location>
</feature>
<feature type="modified residue" description="Phosphoserine" evidence="2">
    <location>
        <position position="17"/>
    </location>
</feature>
<feature type="modified residue" description="Phosphoserine" evidence="2">
    <location>
        <position position="18"/>
    </location>
</feature>
<feature type="modified residue" description="Phosphoserine" evidence="2">
    <location>
        <position position="20"/>
    </location>
</feature>
<accession>A1X154</accession>